<organism>
    <name type="scientific">Actinobacillus succinogenes (strain ATCC 55618 / DSM 22257 / CCUG 43843 / 130Z)</name>
    <dbReference type="NCBI Taxonomy" id="339671"/>
    <lineage>
        <taxon>Bacteria</taxon>
        <taxon>Pseudomonadati</taxon>
        <taxon>Pseudomonadota</taxon>
        <taxon>Gammaproteobacteria</taxon>
        <taxon>Pasteurellales</taxon>
        <taxon>Pasteurellaceae</taxon>
        <taxon>Actinobacillus</taxon>
    </lineage>
</organism>
<reference key="1">
    <citation type="journal article" date="2010" name="BMC Genomics">
        <title>A genomic perspective on the potential of Actinobacillus succinogenes for industrial succinate production.</title>
        <authorList>
            <person name="McKinlay J.B."/>
            <person name="Laivenieks M."/>
            <person name="Schindler B.D."/>
            <person name="McKinlay A.A."/>
            <person name="Siddaramappa S."/>
            <person name="Challacombe J.F."/>
            <person name="Lowry S.R."/>
            <person name="Clum A."/>
            <person name="Lapidus A.L."/>
            <person name="Burkhart K.B."/>
            <person name="Harkins V."/>
            <person name="Vieille C."/>
        </authorList>
    </citation>
    <scope>NUCLEOTIDE SEQUENCE [LARGE SCALE GENOMIC DNA]</scope>
    <source>
        <strain>ATCC 55618 / DSM 22257 / CCUG 43843 / 130Z</strain>
    </source>
</reference>
<accession>A6VMK7</accession>
<protein>
    <recommendedName>
        <fullName evidence="1">Nucleoside diphosphate kinase</fullName>
        <shortName evidence="1">NDK</shortName>
        <shortName evidence="1">NDP kinase</shortName>
        <ecNumber evidence="1">2.7.4.6</ecNumber>
    </recommendedName>
    <alternativeName>
        <fullName evidence="1">Nucleoside-2-P kinase</fullName>
    </alternativeName>
</protein>
<gene>
    <name evidence="1" type="primary">ndk</name>
    <name type="ordered locus">Asuc_0834</name>
</gene>
<comment type="function">
    <text evidence="1">Major role in the synthesis of nucleoside triphosphates other than ATP. The ATP gamma phosphate is transferred to the NDP beta phosphate via a ping-pong mechanism, using a phosphorylated active-site intermediate.</text>
</comment>
<comment type="catalytic activity">
    <reaction evidence="1">
        <text>a 2'-deoxyribonucleoside 5'-diphosphate + ATP = a 2'-deoxyribonucleoside 5'-triphosphate + ADP</text>
        <dbReference type="Rhea" id="RHEA:44640"/>
        <dbReference type="ChEBI" id="CHEBI:30616"/>
        <dbReference type="ChEBI" id="CHEBI:61560"/>
        <dbReference type="ChEBI" id="CHEBI:73316"/>
        <dbReference type="ChEBI" id="CHEBI:456216"/>
        <dbReference type="EC" id="2.7.4.6"/>
    </reaction>
</comment>
<comment type="catalytic activity">
    <reaction evidence="1">
        <text>a ribonucleoside 5'-diphosphate + ATP = a ribonucleoside 5'-triphosphate + ADP</text>
        <dbReference type="Rhea" id="RHEA:18113"/>
        <dbReference type="ChEBI" id="CHEBI:30616"/>
        <dbReference type="ChEBI" id="CHEBI:57930"/>
        <dbReference type="ChEBI" id="CHEBI:61557"/>
        <dbReference type="ChEBI" id="CHEBI:456216"/>
        <dbReference type="EC" id="2.7.4.6"/>
    </reaction>
</comment>
<comment type="cofactor">
    <cofactor evidence="1">
        <name>Mg(2+)</name>
        <dbReference type="ChEBI" id="CHEBI:18420"/>
    </cofactor>
</comment>
<comment type="subunit">
    <text evidence="1">Homotetramer.</text>
</comment>
<comment type="subcellular location">
    <subcellularLocation>
        <location evidence="1">Cytoplasm</location>
    </subcellularLocation>
</comment>
<comment type="similarity">
    <text evidence="1">Belongs to the NDK family.</text>
</comment>
<name>NDK_ACTSZ</name>
<dbReference type="EC" id="2.7.4.6" evidence="1"/>
<dbReference type="EMBL" id="CP000746">
    <property type="protein sequence ID" value="ABR74204.1"/>
    <property type="molecule type" value="Genomic_DNA"/>
</dbReference>
<dbReference type="RefSeq" id="WP_012072582.1">
    <property type="nucleotide sequence ID" value="NC_009655.1"/>
</dbReference>
<dbReference type="SMR" id="A6VMK7"/>
<dbReference type="STRING" id="339671.Asuc_0834"/>
<dbReference type="KEGG" id="asu:Asuc_0834"/>
<dbReference type="eggNOG" id="COG0105">
    <property type="taxonomic scope" value="Bacteria"/>
</dbReference>
<dbReference type="HOGENOM" id="CLU_060216_8_1_6"/>
<dbReference type="OrthoDB" id="9801161at2"/>
<dbReference type="Proteomes" id="UP000001114">
    <property type="component" value="Chromosome"/>
</dbReference>
<dbReference type="GO" id="GO:0005737">
    <property type="term" value="C:cytoplasm"/>
    <property type="evidence" value="ECO:0007669"/>
    <property type="project" value="UniProtKB-SubCell"/>
</dbReference>
<dbReference type="GO" id="GO:0005524">
    <property type="term" value="F:ATP binding"/>
    <property type="evidence" value="ECO:0007669"/>
    <property type="project" value="UniProtKB-UniRule"/>
</dbReference>
<dbReference type="GO" id="GO:0046872">
    <property type="term" value="F:metal ion binding"/>
    <property type="evidence" value="ECO:0007669"/>
    <property type="project" value="UniProtKB-KW"/>
</dbReference>
<dbReference type="GO" id="GO:0004550">
    <property type="term" value="F:nucleoside diphosphate kinase activity"/>
    <property type="evidence" value="ECO:0007669"/>
    <property type="project" value="UniProtKB-UniRule"/>
</dbReference>
<dbReference type="GO" id="GO:0006241">
    <property type="term" value="P:CTP biosynthetic process"/>
    <property type="evidence" value="ECO:0007669"/>
    <property type="project" value="UniProtKB-UniRule"/>
</dbReference>
<dbReference type="GO" id="GO:0006183">
    <property type="term" value="P:GTP biosynthetic process"/>
    <property type="evidence" value="ECO:0007669"/>
    <property type="project" value="UniProtKB-UniRule"/>
</dbReference>
<dbReference type="GO" id="GO:0006228">
    <property type="term" value="P:UTP biosynthetic process"/>
    <property type="evidence" value="ECO:0007669"/>
    <property type="project" value="UniProtKB-UniRule"/>
</dbReference>
<dbReference type="CDD" id="cd04413">
    <property type="entry name" value="NDPk_I"/>
    <property type="match status" value="1"/>
</dbReference>
<dbReference type="FunFam" id="3.30.70.141:FF:000001">
    <property type="entry name" value="Nucleoside diphosphate kinase"/>
    <property type="match status" value="1"/>
</dbReference>
<dbReference type="Gene3D" id="3.30.70.141">
    <property type="entry name" value="Nucleoside diphosphate kinase-like domain"/>
    <property type="match status" value="1"/>
</dbReference>
<dbReference type="HAMAP" id="MF_00451">
    <property type="entry name" value="NDP_kinase"/>
    <property type="match status" value="1"/>
</dbReference>
<dbReference type="InterPro" id="IPR034907">
    <property type="entry name" value="NDK-like_dom"/>
</dbReference>
<dbReference type="InterPro" id="IPR036850">
    <property type="entry name" value="NDK-like_dom_sf"/>
</dbReference>
<dbReference type="InterPro" id="IPR001564">
    <property type="entry name" value="Nucleoside_diP_kinase"/>
</dbReference>
<dbReference type="InterPro" id="IPR023005">
    <property type="entry name" value="Nucleoside_diP_kinase_AS"/>
</dbReference>
<dbReference type="NCBIfam" id="NF001908">
    <property type="entry name" value="PRK00668.1"/>
    <property type="match status" value="1"/>
</dbReference>
<dbReference type="PANTHER" id="PTHR46161">
    <property type="entry name" value="NUCLEOSIDE DIPHOSPHATE KINASE"/>
    <property type="match status" value="1"/>
</dbReference>
<dbReference type="PANTHER" id="PTHR46161:SF3">
    <property type="entry name" value="NUCLEOSIDE DIPHOSPHATE KINASE DDB_G0292928-RELATED"/>
    <property type="match status" value="1"/>
</dbReference>
<dbReference type="Pfam" id="PF00334">
    <property type="entry name" value="NDK"/>
    <property type="match status" value="1"/>
</dbReference>
<dbReference type="PRINTS" id="PR01243">
    <property type="entry name" value="NUCDPKINASE"/>
</dbReference>
<dbReference type="SMART" id="SM00562">
    <property type="entry name" value="NDK"/>
    <property type="match status" value="1"/>
</dbReference>
<dbReference type="SUPFAM" id="SSF54919">
    <property type="entry name" value="Nucleoside diphosphate kinase, NDK"/>
    <property type="match status" value="1"/>
</dbReference>
<dbReference type="PROSITE" id="PS00469">
    <property type="entry name" value="NDPK"/>
    <property type="match status" value="1"/>
</dbReference>
<dbReference type="PROSITE" id="PS51374">
    <property type="entry name" value="NDPK_LIKE"/>
    <property type="match status" value="1"/>
</dbReference>
<feature type="chain" id="PRO_1000072358" description="Nucleoside diphosphate kinase">
    <location>
        <begin position="1"/>
        <end position="141"/>
    </location>
</feature>
<feature type="active site" description="Pros-phosphohistidine intermediate" evidence="1">
    <location>
        <position position="117"/>
    </location>
</feature>
<feature type="binding site" evidence="1">
    <location>
        <position position="11"/>
    </location>
    <ligand>
        <name>ATP</name>
        <dbReference type="ChEBI" id="CHEBI:30616"/>
    </ligand>
</feature>
<feature type="binding site" evidence="1">
    <location>
        <position position="59"/>
    </location>
    <ligand>
        <name>ATP</name>
        <dbReference type="ChEBI" id="CHEBI:30616"/>
    </ligand>
</feature>
<feature type="binding site" evidence="1">
    <location>
        <position position="87"/>
    </location>
    <ligand>
        <name>ATP</name>
        <dbReference type="ChEBI" id="CHEBI:30616"/>
    </ligand>
</feature>
<feature type="binding site" evidence="1">
    <location>
        <position position="93"/>
    </location>
    <ligand>
        <name>ATP</name>
        <dbReference type="ChEBI" id="CHEBI:30616"/>
    </ligand>
</feature>
<feature type="binding site" evidence="1">
    <location>
        <position position="104"/>
    </location>
    <ligand>
        <name>ATP</name>
        <dbReference type="ChEBI" id="CHEBI:30616"/>
    </ligand>
</feature>
<feature type="binding site" evidence="1">
    <location>
        <position position="114"/>
    </location>
    <ligand>
        <name>ATP</name>
        <dbReference type="ChEBI" id="CHEBI:30616"/>
    </ligand>
</feature>
<proteinExistence type="inferred from homology"/>
<sequence>MALERTLSIIKPDAVERNLVGKILSRFEENGFQIVAMKMLRLNQAQAEGFYAEHQGKPFFDGLVEYMTSAPVVVSVLEKDNAVKDYRTLIGATDPQQAAEGTIRKDFAESRRRNSVHGSDSEESAVREIAYFFVESEICPR</sequence>
<keyword id="KW-0067">ATP-binding</keyword>
<keyword id="KW-0963">Cytoplasm</keyword>
<keyword id="KW-0418">Kinase</keyword>
<keyword id="KW-0460">Magnesium</keyword>
<keyword id="KW-0479">Metal-binding</keyword>
<keyword id="KW-0546">Nucleotide metabolism</keyword>
<keyword id="KW-0547">Nucleotide-binding</keyword>
<keyword id="KW-0597">Phosphoprotein</keyword>
<keyword id="KW-1185">Reference proteome</keyword>
<keyword id="KW-0808">Transferase</keyword>
<evidence type="ECO:0000255" key="1">
    <source>
        <dbReference type="HAMAP-Rule" id="MF_00451"/>
    </source>
</evidence>